<evidence type="ECO:0000255" key="1">
    <source>
        <dbReference type="HAMAP-Rule" id="MF_01071"/>
    </source>
</evidence>
<keyword id="KW-0997">Cell inner membrane</keyword>
<keyword id="KW-1003">Cell membrane</keyword>
<keyword id="KW-0472">Membrane</keyword>
<keyword id="KW-0812">Transmembrane</keyword>
<keyword id="KW-1133">Transmembrane helix</keyword>
<comment type="subcellular location">
    <subcellularLocation>
        <location evidence="1">Cell inner membrane</location>
        <topology evidence="1">Multi-pass membrane protein</topology>
    </subcellularLocation>
</comment>
<comment type="similarity">
    <text evidence="1">Belongs to the UPF0266 family.</text>
</comment>
<protein>
    <recommendedName>
        <fullName evidence="1">UPF0266 membrane protein YobD</fullName>
    </recommendedName>
</protein>
<sequence length="158" mass="18167">MTITDLVLILFIAALLAFAIYDQFIMPRRNGPTLLAIPLLRRGRIDSVIFVGLIVILIYNNVTNHGALITTWLLSALALMGFYIFWIRIPKIIFKQKGFFFANVWIEYSRIKAMNLSEDGVLVMQLEQRRLLIRVRNIDDLEKIYKLLVSGNAANLLI</sequence>
<dbReference type="EMBL" id="CP000266">
    <property type="protein sequence ID" value="ABF03602.1"/>
    <property type="molecule type" value="Genomic_DNA"/>
</dbReference>
<dbReference type="RefSeq" id="WP_000156246.1">
    <property type="nucleotide sequence ID" value="NC_008258.1"/>
</dbReference>
<dbReference type="KEGG" id="sfv:SFV_1409"/>
<dbReference type="HOGENOM" id="CLU_133645_0_0_6"/>
<dbReference type="Proteomes" id="UP000000659">
    <property type="component" value="Chromosome"/>
</dbReference>
<dbReference type="GO" id="GO:0005886">
    <property type="term" value="C:plasma membrane"/>
    <property type="evidence" value="ECO:0007669"/>
    <property type="project" value="UniProtKB-SubCell"/>
</dbReference>
<dbReference type="HAMAP" id="MF_01071">
    <property type="entry name" value="UPF0266"/>
    <property type="match status" value="1"/>
</dbReference>
<dbReference type="InterPro" id="IPR009328">
    <property type="entry name" value="DUF986"/>
</dbReference>
<dbReference type="NCBIfam" id="NF002791">
    <property type="entry name" value="PRK02913.1"/>
    <property type="match status" value="1"/>
</dbReference>
<dbReference type="Pfam" id="PF06173">
    <property type="entry name" value="DUF986"/>
    <property type="match status" value="1"/>
</dbReference>
<dbReference type="PIRSF" id="PIRSF020687">
    <property type="entry name" value="UCP020687"/>
    <property type="match status" value="1"/>
</dbReference>
<name>YOBD_SHIF8</name>
<reference key="1">
    <citation type="journal article" date="2006" name="BMC Genomics">
        <title>Complete genome sequence of Shigella flexneri 5b and comparison with Shigella flexneri 2a.</title>
        <authorList>
            <person name="Nie H."/>
            <person name="Yang F."/>
            <person name="Zhang X."/>
            <person name="Yang J."/>
            <person name="Chen L."/>
            <person name="Wang J."/>
            <person name="Xiong Z."/>
            <person name="Peng J."/>
            <person name="Sun L."/>
            <person name="Dong J."/>
            <person name="Xue Y."/>
            <person name="Xu X."/>
            <person name="Chen S."/>
            <person name="Yao Z."/>
            <person name="Shen Y."/>
            <person name="Jin Q."/>
        </authorList>
    </citation>
    <scope>NUCLEOTIDE SEQUENCE [LARGE SCALE GENOMIC DNA]</scope>
    <source>
        <strain>8401</strain>
    </source>
</reference>
<feature type="chain" id="PRO_1000064593" description="UPF0266 membrane protein YobD">
    <location>
        <begin position="1"/>
        <end position="158"/>
    </location>
</feature>
<feature type="transmembrane region" description="Helical" evidence="1">
    <location>
        <begin position="6"/>
        <end position="26"/>
    </location>
</feature>
<feature type="transmembrane region" description="Helical" evidence="1">
    <location>
        <begin position="45"/>
        <end position="65"/>
    </location>
</feature>
<feature type="transmembrane region" description="Helical" evidence="1">
    <location>
        <begin position="67"/>
        <end position="87"/>
    </location>
</feature>
<proteinExistence type="inferred from homology"/>
<organism>
    <name type="scientific">Shigella flexneri serotype 5b (strain 8401)</name>
    <dbReference type="NCBI Taxonomy" id="373384"/>
    <lineage>
        <taxon>Bacteria</taxon>
        <taxon>Pseudomonadati</taxon>
        <taxon>Pseudomonadota</taxon>
        <taxon>Gammaproteobacteria</taxon>
        <taxon>Enterobacterales</taxon>
        <taxon>Enterobacteriaceae</taxon>
        <taxon>Shigella</taxon>
    </lineage>
</organism>
<accession>Q0T513</accession>
<gene>
    <name evidence="1" type="primary">yobD</name>
    <name type="ordered locus">SFV_1409</name>
</gene>